<proteinExistence type="inferred from homology"/>
<accession>B6IBL2</accession>
<organism>
    <name type="scientific">Escherichia coli (strain SE11)</name>
    <dbReference type="NCBI Taxonomy" id="409438"/>
    <lineage>
        <taxon>Bacteria</taxon>
        <taxon>Pseudomonadati</taxon>
        <taxon>Pseudomonadota</taxon>
        <taxon>Gammaproteobacteria</taxon>
        <taxon>Enterobacterales</taxon>
        <taxon>Enterobacteriaceae</taxon>
        <taxon>Escherichia</taxon>
    </lineage>
</organism>
<evidence type="ECO:0000255" key="1">
    <source>
        <dbReference type="HAMAP-Rule" id="MF_01874"/>
    </source>
</evidence>
<comment type="subcellular location">
    <subcellularLocation>
        <location evidence="1">Cell membrane</location>
        <topology evidence="1">Multi-pass membrane protein</topology>
    </subcellularLocation>
</comment>
<comment type="similarity">
    <text evidence="1">Belongs to the UPF0756 family.</text>
</comment>
<gene>
    <name evidence="1" type="primary">yeaL</name>
    <name type="ordered locus">ECSE_1960</name>
</gene>
<keyword id="KW-1003">Cell membrane</keyword>
<keyword id="KW-0472">Membrane</keyword>
<keyword id="KW-0812">Transmembrane</keyword>
<keyword id="KW-1133">Transmembrane helix</keyword>
<name>YEAL_ECOSE</name>
<dbReference type="EMBL" id="AP009240">
    <property type="protein sequence ID" value="BAG77484.1"/>
    <property type="molecule type" value="Genomic_DNA"/>
</dbReference>
<dbReference type="RefSeq" id="WP_000460707.1">
    <property type="nucleotide sequence ID" value="NC_011415.1"/>
</dbReference>
<dbReference type="KEGG" id="ecy:ECSE_1960"/>
<dbReference type="HOGENOM" id="CLU_125889_0_0_6"/>
<dbReference type="Proteomes" id="UP000008199">
    <property type="component" value="Chromosome"/>
</dbReference>
<dbReference type="GO" id="GO:0005886">
    <property type="term" value="C:plasma membrane"/>
    <property type="evidence" value="ECO:0007669"/>
    <property type="project" value="UniProtKB-SubCell"/>
</dbReference>
<dbReference type="HAMAP" id="MF_01874">
    <property type="entry name" value="UPF0756"/>
    <property type="match status" value="1"/>
</dbReference>
<dbReference type="InterPro" id="IPR007382">
    <property type="entry name" value="UPF0756_TM"/>
</dbReference>
<dbReference type="PANTHER" id="PTHR38452">
    <property type="entry name" value="UPF0756 MEMBRANE PROTEIN YEAL"/>
    <property type="match status" value="1"/>
</dbReference>
<dbReference type="PANTHER" id="PTHR38452:SF1">
    <property type="entry name" value="UPF0756 MEMBRANE PROTEIN YEAL"/>
    <property type="match status" value="1"/>
</dbReference>
<dbReference type="Pfam" id="PF04284">
    <property type="entry name" value="DUF441"/>
    <property type="match status" value="1"/>
</dbReference>
<protein>
    <recommendedName>
        <fullName evidence="1">UPF0756 membrane protein YeaL</fullName>
    </recommendedName>
</protein>
<sequence length="148" mass="15256">MFDVTLLILLGLAALGFISHNTTVAVSILVLIIVRVTPLSTFFPWIEKQGLSIGIIILTIGVMAPIASGTLPPSTLIHSFLNWKSLVAIAVGVIVSWLGGRGVTLMGSQPQLVAGLLVGTVLGVALFRGVPVGPLIAAGLVSLIVGKQ</sequence>
<feature type="chain" id="PRO_0000388859" description="UPF0756 membrane protein YeaL">
    <location>
        <begin position="1"/>
        <end position="148"/>
    </location>
</feature>
<feature type="transmembrane region" description="Helical" evidence="1">
    <location>
        <begin position="14"/>
        <end position="34"/>
    </location>
</feature>
<feature type="transmembrane region" description="Helical" evidence="1">
    <location>
        <begin position="51"/>
        <end position="71"/>
    </location>
</feature>
<feature type="transmembrane region" description="Helical" evidence="1">
    <location>
        <begin position="86"/>
        <end position="106"/>
    </location>
</feature>
<feature type="transmembrane region" description="Helical" evidence="1">
    <location>
        <begin position="121"/>
        <end position="141"/>
    </location>
</feature>
<reference key="1">
    <citation type="journal article" date="2008" name="DNA Res.">
        <title>Complete genome sequence and comparative analysis of the wild-type commensal Escherichia coli strain SE11 isolated from a healthy adult.</title>
        <authorList>
            <person name="Oshima K."/>
            <person name="Toh H."/>
            <person name="Ogura Y."/>
            <person name="Sasamoto H."/>
            <person name="Morita H."/>
            <person name="Park S.-H."/>
            <person name="Ooka T."/>
            <person name="Iyoda S."/>
            <person name="Taylor T.D."/>
            <person name="Hayashi T."/>
            <person name="Itoh K."/>
            <person name="Hattori M."/>
        </authorList>
    </citation>
    <scope>NUCLEOTIDE SEQUENCE [LARGE SCALE GENOMIC DNA]</scope>
    <source>
        <strain>SE11</strain>
    </source>
</reference>